<organism>
    <name type="scientific">Haemophilus influenzae (strain PittGG)</name>
    <dbReference type="NCBI Taxonomy" id="374931"/>
    <lineage>
        <taxon>Bacteria</taxon>
        <taxon>Pseudomonadati</taxon>
        <taxon>Pseudomonadota</taxon>
        <taxon>Gammaproteobacteria</taxon>
        <taxon>Pasteurellales</taxon>
        <taxon>Pasteurellaceae</taxon>
        <taxon>Haemophilus</taxon>
    </lineage>
</organism>
<protein>
    <recommendedName>
        <fullName evidence="1">4-hydroxy-3-methylbut-2-en-1-yl diphosphate synthase (flavodoxin)</fullName>
        <ecNumber evidence="1">1.17.7.3</ecNumber>
    </recommendedName>
    <alternativeName>
        <fullName evidence="1">1-hydroxy-2-methyl-2-(E)-butenyl 4-diphosphate synthase</fullName>
    </alternativeName>
</protein>
<name>ISPG_HAEIG</name>
<sequence length="368" mass="40158">MSAFQPTIKRRESTKIYVGNVPIGGDAPIAVQSMTNTRTTDVEATVAQIKSLERVGADIVRVSVPTMDAAEAFKQIKQQVNVPLVADIHFDYRIALKVAEYGVDCLRINPGNIGREDRVRAVVDCARDKNIPIRIGVNAGSLEKDLQEKYGEPTPEALLESALRHVEILDRLNFDQFKVSVKASDVFLAVESYRLLAKAIKQPLHLGITEAGGARAGAVKSAVGLGMLLAEGIGDTLRISLAADPIEEIKVGFDILKSLRIRSRGINFIACPTCSRQEFDVIGTVNALEQRLEDIITPMDVSIIGCVVNGPGEALISDLGVTGGNKKSGYYLDGERQKERFDNEDIVNQLEAKIRAKVARQDPKNRII</sequence>
<evidence type="ECO:0000255" key="1">
    <source>
        <dbReference type="HAMAP-Rule" id="MF_00159"/>
    </source>
</evidence>
<accession>A5UGH1</accession>
<gene>
    <name evidence="1" type="primary">ispG</name>
    <name type="ordered locus">CGSHiGG_04650</name>
</gene>
<dbReference type="EC" id="1.17.7.3" evidence="1"/>
<dbReference type="EMBL" id="CP000672">
    <property type="protein sequence ID" value="ABQ99876.1"/>
    <property type="molecule type" value="Genomic_DNA"/>
</dbReference>
<dbReference type="SMR" id="A5UGH1"/>
<dbReference type="KEGG" id="hiq:CGSHiGG_04650"/>
<dbReference type="HOGENOM" id="CLU_042258_0_0_6"/>
<dbReference type="UniPathway" id="UPA00056">
    <property type="reaction ID" value="UER00096"/>
</dbReference>
<dbReference type="Proteomes" id="UP000001990">
    <property type="component" value="Chromosome"/>
</dbReference>
<dbReference type="GO" id="GO:0051539">
    <property type="term" value="F:4 iron, 4 sulfur cluster binding"/>
    <property type="evidence" value="ECO:0007669"/>
    <property type="project" value="UniProtKB-UniRule"/>
</dbReference>
<dbReference type="GO" id="GO:0046429">
    <property type="term" value="F:4-hydroxy-3-methylbut-2-en-1-yl diphosphate synthase activity (ferredoxin)"/>
    <property type="evidence" value="ECO:0007669"/>
    <property type="project" value="UniProtKB-UniRule"/>
</dbReference>
<dbReference type="GO" id="GO:0141197">
    <property type="term" value="F:4-hydroxy-3-methylbut-2-enyl-diphosphate synthase activity (flavodoxin)"/>
    <property type="evidence" value="ECO:0007669"/>
    <property type="project" value="UniProtKB-EC"/>
</dbReference>
<dbReference type="GO" id="GO:0005506">
    <property type="term" value="F:iron ion binding"/>
    <property type="evidence" value="ECO:0007669"/>
    <property type="project" value="InterPro"/>
</dbReference>
<dbReference type="GO" id="GO:0019288">
    <property type="term" value="P:isopentenyl diphosphate biosynthetic process, methylerythritol 4-phosphate pathway"/>
    <property type="evidence" value="ECO:0007669"/>
    <property type="project" value="UniProtKB-UniRule"/>
</dbReference>
<dbReference type="GO" id="GO:0016114">
    <property type="term" value="P:terpenoid biosynthetic process"/>
    <property type="evidence" value="ECO:0007669"/>
    <property type="project" value="InterPro"/>
</dbReference>
<dbReference type="FunFam" id="3.20.20.20:FF:000001">
    <property type="entry name" value="4-hydroxy-3-methylbut-2-en-1-yl diphosphate synthase (flavodoxin)"/>
    <property type="match status" value="1"/>
</dbReference>
<dbReference type="FunFam" id="3.30.413.10:FF:000002">
    <property type="entry name" value="4-hydroxy-3-methylbut-2-en-1-yl diphosphate synthase (flavodoxin)"/>
    <property type="match status" value="1"/>
</dbReference>
<dbReference type="Gene3D" id="3.20.20.20">
    <property type="entry name" value="Dihydropteroate synthase-like"/>
    <property type="match status" value="1"/>
</dbReference>
<dbReference type="Gene3D" id="3.30.413.10">
    <property type="entry name" value="Sulfite Reductase Hemoprotein, domain 1"/>
    <property type="match status" value="1"/>
</dbReference>
<dbReference type="HAMAP" id="MF_00159">
    <property type="entry name" value="IspG"/>
    <property type="match status" value="1"/>
</dbReference>
<dbReference type="InterPro" id="IPR011005">
    <property type="entry name" value="Dihydropteroate_synth-like_sf"/>
</dbReference>
<dbReference type="InterPro" id="IPR016425">
    <property type="entry name" value="IspG_bac"/>
</dbReference>
<dbReference type="InterPro" id="IPR004588">
    <property type="entry name" value="IspG_bac-typ"/>
</dbReference>
<dbReference type="InterPro" id="IPR045854">
    <property type="entry name" value="NO2/SO3_Rdtase_4Fe4S_sf"/>
</dbReference>
<dbReference type="NCBIfam" id="TIGR00612">
    <property type="entry name" value="ispG_gcpE"/>
    <property type="match status" value="1"/>
</dbReference>
<dbReference type="NCBIfam" id="NF001540">
    <property type="entry name" value="PRK00366.1"/>
    <property type="match status" value="1"/>
</dbReference>
<dbReference type="PANTHER" id="PTHR30454">
    <property type="entry name" value="4-HYDROXY-3-METHYLBUT-2-EN-1-YL DIPHOSPHATE SYNTHASE"/>
    <property type="match status" value="1"/>
</dbReference>
<dbReference type="PANTHER" id="PTHR30454:SF0">
    <property type="entry name" value="4-HYDROXY-3-METHYLBUT-2-EN-1-YL DIPHOSPHATE SYNTHASE (FERREDOXIN), CHLOROPLASTIC"/>
    <property type="match status" value="1"/>
</dbReference>
<dbReference type="Pfam" id="PF04551">
    <property type="entry name" value="GcpE"/>
    <property type="match status" value="1"/>
</dbReference>
<dbReference type="PIRSF" id="PIRSF004640">
    <property type="entry name" value="IspG"/>
    <property type="match status" value="1"/>
</dbReference>
<dbReference type="SUPFAM" id="SSF51717">
    <property type="entry name" value="Dihydropteroate synthetase-like"/>
    <property type="match status" value="1"/>
</dbReference>
<dbReference type="SUPFAM" id="SSF56014">
    <property type="entry name" value="Nitrite and sulphite reductase 4Fe-4S domain-like"/>
    <property type="match status" value="1"/>
</dbReference>
<comment type="function">
    <text evidence="1">Converts 2C-methyl-D-erythritol 2,4-cyclodiphosphate (ME-2,4cPP) into 1-hydroxy-2-methyl-2-(E)-butenyl 4-diphosphate.</text>
</comment>
<comment type="catalytic activity">
    <reaction evidence="1">
        <text>(2E)-4-hydroxy-3-methylbut-2-enyl diphosphate + oxidized [flavodoxin] + H2O + 2 H(+) = 2-C-methyl-D-erythritol 2,4-cyclic diphosphate + reduced [flavodoxin]</text>
        <dbReference type="Rhea" id="RHEA:43604"/>
        <dbReference type="Rhea" id="RHEA-COMP:10622"/>
        <dbReference type="Rhea" id="RHEA-COMP:10623"/>
        <dbReference type="ChEBI" id="CHEBI:15377"/>
        <dbReference type="ChEBI" id="CHEBI:15378"/>
        <dbReference type="ChEBI" id="CHEBI:57618"/>
        <dbReference type="ChEBI" id="CHEBI:58210"/>
        <dbReference type="ChEBI" id="CHEBI:58483"/>
        <dbReference type="ChEBI" id="CHEBI:128753"/>
        <dbReference type="EC" id="1.17.7.3"/>
    </reaction>
</comment>
<comment type="cofactor">
    <cofactor evidence="1">
        <name>[4Fe-4S] cluster</name>
        <dbReference type="ChEBI" id="CHEBI:49883"/>
    </cofactor>
    <text evidence="1">Binds 1 [4Fe-4S] cluster.</text>
</comment>
<comment type="pathway">
    <text evidence="1">Isoprenoid biosynthesis; isopentenyl diphosphate biosynthesis via DXP pathway; isopentenyl diphosphate from 1-deoxy-D-xylulose 5-phosphate: step 5/6.</text>
</comment>
<comment type="similarity">
    <text evidence="1">Belongs to the IspG family.</text>
</comment>
<reference key="1">
    <citation type="journal article" date="2007" name="Genome Biol.">
        <title>Characterization and modeling of the Haemophilus influenzae core and supragenomes based on the complete genomic sequences of Rd and 12 clinical nontypeable strains.</title>
        <authorList>
            <person name="Hogg J.S."/>
            <person name="Hu F.Z."/>
            <person name="Janto B."/>
            <person name="Boissy R."/>
            <person name="Hayes J."/>
            <person name="Keefe R."/>
            <person name="Post J.C."/>
            <person name="Ehrlich G.D."/>
        </authorList>
    </citation>
    <scope>NUCLEOTIDE SEQUENCE [LARGE SCALE GENOMIC DNA]</scope>
    <source>
        <strain>PittGG</strain>
    </source>
</reference>
<feature type="chain" id="PRO_1000011471" description="4-hydroxy-3-methylbut-2-en-1-yl diphosphate synthase (flavodoxin)">
    <location>
        <begin position="1"/>
        <end position="368"/>
    </location>
</feature>
<feature type="binding site" evidence="1">
    <location>
        <position position="271"/>
    </location>
    <ligand>
        <name>[4Fe-4S] cluster</name>
        <dbReference type="ChEBI" id="CHEBI:49883"/>
    </ligand>
</feature>
<feature type="binding site" evidence="1">
    <location>
        <position position="274"/>
    </location>
    <ligand>
        <name>[4Fe-4S] cluster</name>
        <dbReference type="ChEBI" id="CHEBI:49883"/>
    </ligand>
</feature>
<feature type="binding site" evidence="1">
    <location>
        <position position="306"/>
    </location>
    <ligand>
        <name>[4Fe-4S] cluster</name>
        <dbReference type="ChEBI" id="CHEBI:49883"/>
    </ligand>
</feature>
<feature type="binding site" evidence="1">
    <location>
        <position position="313"/>
    </location>
    <ligand>
        <name>[4Fe-4S] cluster</name>
        <dbReference type="ChEBI" id="CHEBI:49883"/>
    </ligand>
</feature>
<proteinExistence type="inferred from homology"/>
<keyword id="KW-0004">4Fe-4S</keyword>
<keyword id="KW-0408">Iron</keyword>
<keyword id="KW-0411">Iron-sulfur</keyword>
<keyword id="KW-0414">Isoprene biosynthesis</keyword>
<keyword id="KW-0479">Metal-binding</keyword>
<keyword id="KW-0560">Oxidoreductase</keyword>